<name>BTN1_NEUCR</name>
<reference key="1">
    <citation type="journal article" date="2003" name="Nature">
        <title>The genome sequence of the filamentous fungus Neurospora crassa.</title>
        <authorList>
            <person name="Galagan J.E."/>
            <person name="Calvo S.E."/>
            <person name="Borkovich K.A."/>
            <person name="Selker E.U."/>
            <person name="Read N.D."/>
            <person name="Jaffe D.B."/>
            <person name="FitzHugh W."/>
            <person name="Ma L.-J."/>
            <person name="Smirnov S."/>
            <person name="Purcell S."/>
            <person name="Rehman B."/>
            <person name="Elkins T."/>
            <person name="Engels R."/>
            <person name="Wang S."/>
            <person name="Nielsen C.B."/>
            <person name="Butler J."/>
            <person name="Endrizzi M."/>
            <person name="Qui D."/>
            <person name="Ianakiev P."/>
            <person name="Bell-Pedersen D."/>
            <person name="Nelson M.A."/>
            <person name="Werner-Washburne M."/>
            <person name="Selitrennikoff C.P."/>
            <person name="Kinsey J.A."/>
            <person name="Braun E.L."/>
            <person name="Zelter A."/>
            <person name="Schulte U."/>
            <person name="Kothe G.O."/>
            <person name="Jedd G."/>
            <person name="Mewes H.-W."/>
            <person name="Staben C."/>
            <person name="Marcotte E."/>
            <person name="Greenberg D."/>
            <person name="Roy A."/>
            <person name="Foley K."/>
            <person name="Naylor J."/>
            <person name="Stange-Thomann N."/>
            <person name="Barrett R."/>
            <person name="Gnerre S."/>
            <person name="Kamal M."/>
            <person name="Kamvysselis M."/>
            <person name="Mauceli E.W."/>
            <person name="Bielke C."/>
            <person name="Rudd S."/>
            <person name="Frishman D."/>
            <person name="Krystofova S."/>
            <person name="Rasmussen C."/>
            <person name="Metzenberg R.L."/>
            <person name="Perkins D.D."/>
            <person name="Kroken S."/>
            <person name="Cogoni C."/>
            <person name="Macino G."/>
            <person name="Catcheside D.E.A."/>
            <person name="Li W."/>
            <person name="Pratt R.J."/>
            <person name="Osmani S.A."/>
            <person name="DeSouza C.P.C."/>
            <person name="Glass N.L."/>
            <person name="Orbach M.J."/>
            <person name="Berglund J.A."/>
            <person name="Voelker R."/>
            <person name="Yarden O."/>
            <person name="Plamann M."/>
            <person name="Seiler S."/>
            <person name="Dunlap J.C."/>
            <person name="Radford A."/>
            <person name="Aramayo R."/>
            <person name="Natvig D.O."/>
            <person name="Alex L.A."/>
            <person name="Mannhaupt G."/>
            <person name="Ebbole D.J."/>
            <person name="Freitag M."/>
            <person name="Paulsen I."/>
            <person name="Sachs M.S."/>
            <person name="Lander E.S."/>
            <person name="Nusbaum C."/>
            <person name="Birren B.W."/>
        </authorList>
    </citation>
    <scope>NUCLEOTIDE SEQUENCE [LARGE SCALE GENOMIC DNA]</scope>
    <source>
        <strain>ATCC 24698 / 74-OR23-1A / CBS 708.71 / DSM 1257 / FGSC 987</strain>
    </source>
</reference>
<feature type="signal peptide" evidence="2">
    <location>
        <begin position="1"/>
        <end position="22"/>
    </location>
</feature>
<feature type="chain" id="PRO_0000256264" description="Protein btn-1">
    <location>
        <begin position="23"/>
        <end position="464"/>
    </location>
</feature>
<feature type="transmembrane region" description="Helical" evidence="2">
    <location>
        <begin position="38"/>
        <end position="58"/>
    </location>
</feature>
<feature type="transmembrane region" description="Helical" evidence="2">
    <location>
        <begin position="73"/>
        <end position="93"/>
    </location>
</feature>
<feature type="transmembrane region" description="Helical" evidence="2">
    <location>
        <begin position="102"/>
        <end position="122"/>
    </location>
</feature>
<feature type="transmembrane region" description="Helical" evidence="2">
    <location>
        <begin position="129"/>
        <end position="149"/>
    </location>
</feature>
<feature type="transmembrane region" description="Helical" evidence="2">
    <location>
        <begin position="167"/>
        <end position="187"/>
    </location>
</feature>
<feature type="transmembrane region" description="Helical" evidence="2">
    <location>
        <begin position="190"/>
        <end position="210"/>
    </location>
</feature>
<feature type="transmembrane region" description="Helical" evidence="2">
    <location>
        <begin position="288"/>
        <end position="308"/>
    </location>
</feature>
<feature type="transmembrane region" description="Helical" evidence="2">
    <location>
        <begin position="332"/>
        <end position="352"/>
    </location>
</feature>
<feature type="transmembrane region" description="Helical" evidence="2">
    <location>
        <begin position="354"/>
        <end position="374"/>
    </location>
</feature>
<feature type="transmembrane region" description="Helical" evidence="2">
    <location>
        <begin position="376"/>
        <end position="396"/>
    </location>
</feature>
<comment type="function">
    <text evidence="1">Involved in vacuolar transport and vacuole pH homeostasis. Also required for cytokinesis (By similarity).</text>
</comment>
<comment type="subcellular location">
    <subcellularLocation>
        <location evidence="1">Vacuole membrane</location>
        <topology evidence="1">Multi-pass membrane protein</topology>
    </subcellularLocation>
</comment>
<comment type="similarity">
    <text evidence="3">Belongs to the battenin family.</text>
</comment>
<organism>
    <name type="scientific">Neurospora crassa (strain ATCC 24698 / 74-OR23-1A / CBS 708.71 / DSM 1257 / FGSC 987)</name>
    <dbReference type="NCBI Taxonomy" id="367110"/>
    <lineage>
        <taxon>Eukaryota</taxon>
        <taxon>Fungi</taxon>
        <taxon>Dikarya</taxon>
        <taxon>Ascomycota</taxon>
        <taxon>Pezizomycotina</taxon>
        <taxon>Sordariomycetes</taxon>
        <taxon>Sordariomycetidae</taxon>
        <taxon>Sordariales</taxon>
        <taxon>Sordariaceae</taxon>
        <taxon>Neurospora</taxon>
    </lineage>
</organism>
<sequence>MNRSPSSSGLLPLPGAPSSSWALYRARLSSLLQSVDTAVFIAFWLFGLINNVLYVIILSAAQDLVGNGIPKGVVLLADVMPSFLTKLVAPYFIHRIPYATRIFIFVTLSSAGMLLIAFTPPSRSVAVKLIGVVLSSISSGGGELSFLGLTHYYGHMSLAAWGSGTGGAGLIGSLLYVMLTDWIGLSVKTSLLASAFLPIIMLVSFFLILPHGPLRASARKTYEPIANRDSFQEESEGAENNFDDIPTSTASSSLLAPGPAVAATAYSSHPTEDARKDSLAAKIQRSKSLFFPYMLPLLLVYIAEYTINQGVSPTLLFPLESSPFAEFRSFYPFYGFLYQVGVFISRSSIAFIRIHHLYLPSLLQVANLVLLTLHALLNFIPSVYIVFVIIFWEGLLGGCVYVNTFAEIMEHVPAEDREFSLGATSVSDSGGICVASFLSMAMEIWLCNWQVDHGRDWCRRIKAG</sequence>
<accession>Q7SC45</accession>
<accession>A7UX20</accession>
<dbReference type="EMBL" id="CM002237">
    <property type="protein sequence ID" value="EAA34044.2"/>
    <property type="molecule type" value="Genomic_DNA"/>
</dbReference>
<dbReference type="RefSeq" id="XP_963280.2">
    <property type="nucleotide sequence ID" value="XM_958187.3"/>
</dbReference>
<dbReference type="SMR" id="Q7SC45"/>
<dbReference type="FunCoup" id="Q7SC45">
    <property type="interactions" value="104"/>
</dbReference>
<dbReference type="STRING" id="367110.Q7SC45"/>
<dbReference type="PaxDb" id="5141-EFNCRP00000007777"/>
<dbReference type="EnsemblFungi" id="EAA34044">
    <property type="protein sequence ID" value="EAA34044"/>
    <property type="gene ID" value="NCU08408"/>
</dbReference>
<dbReference type="GeneID" id="3879435"/>
<dbReference type="KEGG" id="ncr:NCU08408"/>
<dbReference type="VEuPathDB" id="FungiDB:NCU08408"/>
<dbReference type="HOGENOM" id="CLU_029663_1_2_1"/>
<dbReference type="InParanoid" id="Q7SC45"/>
<dbReference type="OMA" id="WLCNWQV"/>
<dbReference type="OrthoDB" id="5965864at2759"/>
<dbReference type="Proteomes" id="UP000001805">
    <property type="component" value="Chromosome 6, Linkage Group II"/>
</dbReference>
<dbReference type="GO" id="GO:0000324">
    <property type="term" value="C:fungal-type vacuole"/>
    <property type="evidence" value="ECO:0007669"/>
    <property type="project" value="EnsemblFungi"/>
</dbReference>
<dbReference type="GO" id="GO:0005774">
    <property type="term" value="C:vacuolar membrane"/>
    <property type="evidence" value="ECO:0007669"/>
    <property type="project" value="UniProtKB-SubCell"/>
</dbReference>
<dbReference type="GO" id="GO:0005773">
    <property type="term" value="C:vacuole"/>
    <property type="evidence" value="ECO:0000318"/>
    <property type="project" value="GO_Central"/>
</dbReference>
<dbReference type="GO" id="GO:1903826">
    <property type="term" value="P:L-arginine transmembrane transport"/>
    <property type="evidence" value="ECO:0007669"/>
    <property type="project" value="EnsemblFungi"/>
</dbReference>
<dbReference type="GO" id="GO:0015819">
    <property type="term" value="P:lysine transport"/>
    <property type="evidence" value="ECO:0007669"/>
    <property type="project" value="EnsemblFungi"/>
</dbReference>
<dbReference type="GO" id="GO:0051453">
    <property type="term" value="P:regulation of intracellular pH"/>
    <property type="evidence" value="ECO:0000318"/>
    <property type="project" value="GO_Central"/>
</dbReference>
<dbReference type="Gene3D" id="1.20.1250.20">
    <property type="entry name" value="MFS general substrate transporter like domains"/>
    <property type="match status" value="1"/>
</dbReference>
<dbReference type="InterPro" id="IPR003492">
    <property type="entry name" value="Battenin_disease_Cln3"/>
</dbReference>
<dbReference type="InterPro" id="IPR018460">
    <property type="entry name" value="Battenin_disease_Cln3_subgr"/>
</dbReference>
<dbReference type="InterPro" id="IPR036259">
    <property type="entry name" value="MFS_trans_sf"/>
</dbReference>
<dbReference type="PANTHER" id="PTHR10981">
    <property type="entry name" value="BATTENIN"/>
    <property type="match status" value="1"/>
</dbReference>
<dbReference type="PANTHER" id="PTHR10981:SF0">
    <property type="entry name" value="BATTENIN"/>
    <property type="match status" value="1"/>
</dbReference>
<dbReference type="Pfam" id="PF02487">
    <property type="entry name" value="CLN3"/>
    <property type="match status" value="1"/>
</dbReference>
<dbReference type="PIRSF" id="PIRSF015974">
    <property type="entry name" value="CLN3_BTN1"/>
    <property type="match status" value="1"/>
</dbReference>
<dbReference type="PRINTS" id="PR01315">
    <property type="entry name" value="BATTENIN"/>
</dbReference>
<dbReference type="SUPFAM" id="SSF103473">
    <property type="entry name" value="MFS general substrate transporter"/>
    <property type="match status" value="1"/>
</dbReference>
<protein>
    <recommendedName>
        <fullName>Protein btn-1</fullName>
    </recommendedName>
</protein>
<gene>
    <name type="primary">cln3</name>
    <name type="synonym">btn-1</name>
    <name type="ORF">NCU08408</name>
    <name type="ORF">NCU10272</name>
</gene>
<keyword id="KW-0029">Amino-acid transport</keyword>
<keyword id="KW-0472">Membrane</keyword>
<keyword id="KW-1185">Reference proteome</keyword>
<keyword id="KW-0732">Signal</keyword>
<keyword id="KW-0812">Transmembrane</keyword>
<keyword id="KW-1133">Transmembrane helix</keyword>
<keyword id="KW-0813">Transport</keyword>
<keyword id="KW-0926">Vacuole</keyword>
<evidence type="ECO:0000250" key="1"/>
<evidence type="ECO:0000255" key="2"/>
<evidence type="ECO:0000305" key="3"/>
<proteinExistence type="inferred from homology"/>